<gene>
    <name type="primary">gprc6a</name>
</gene>
<feature type="signal peptide" evidence="2">
    <location>
        <begin position="1"/>
        <end position="19"/>
    </location>
</feature>
<feature type="chain" id="PRO_0000043199" description="G-protein coupled receptor family C group 6 member A">
    <location>
        <begin position="20"/>
        <end position="867"/>
    </location>
</feature>
<feature type="topological domain" description="Extracellular" evidence="2">
    <location>
        <begin position="20"/>
        <end position="566"/>
    </location>
</feature>
<feature type="transmembrane region" description="Helical" evidence="2">
    <location>
        <begin position="567"/>
        <end position="587"/>
    </location>
</feature>
<feature type="topological domain" description="Cytoplasmic" evidence="2">
    <location>
        <begin position="588"/>
        <end position="602"/>
    </location>
</feature>
<feature type="transmembrane region" description="Helical" evidence="2">
    <location>
        <begin position="603"/>
        <end position="623"/>
    </location>
</feature>
<feature type="topological domain" description="Extracellular" evidence="2">
    <location>
        <begin position="624"/>
        <end position="634"/>
    </location>
</feature>
<feature type="transmembrane region" description="Helical" evidence="2">
    <location>
        <begin position="635"/>
        <end position="655"/>
    </location>
</feature>
<feature type="topological domain" description="Cytoplasmic" evidence="2">
    <location>
        <begin position="656"/>
        <end position="675"/>
    </location>
</feature>
<feature type="transmembrane region" description="Helical" evidence="2">
    <location>
        <begin position="676"/>
        <end position="696"/>
    </location>
</feature>
<feature type="topological domain" description="Extracellular" evidence="2">
    <location>
        <begin position="697"/>
        <end position="716"/>
    </location>
</feature>
<feature type="transmembrane region" description="Helical" evidence="2">
    <location>
        <begin position="717"/>
        <end position="737"/>
    </location>
</feature>
<feature type="topological domain" description="Cytoplasmic" evidence="2">
    <location>
        <begin position="738"/>
        <end position="754"/>
    </location>
</feature>
<feature type="transmembrane region" description="Helical" evidence="2">
    <location>
        <begin position="755"/>
        <end position="775"/>
    </location>
</feature>
<feature type="topological domain" description="Extracellular" evidence="2">
    <location>
        <begin position="776"/>
        <end position="781"/>
    </location>
</feature>
<feature type="transmembrane region" description="Helical" evidence="2">
    <location>
        <begin position="782"/>
        <end position="802"/>
    </location>
</feature>
<feature type="topological domain" description="Cytoplasmic" evidence="2">
    <location>
        <begin position="803"/>
        <end position="867"/>
    </location>
</feature>
<feature type="site" description="Critical determinant of selectivity of acidic versus basic amino acid ligands">
    <location>
        <position position="386"/>
    </location>
</feature>
<feature type="glycosylation site" description="N-linked (GlcNAc...) asparagine" evidence="2">
    <location>
        <position position="51"/>
    </location>
</feature>
<feature type="glycosylation site" description="N-linked (GlcNAc...) asparagine" evidence="2">
    <location>
        <position position="55"/>
    </location>
</feature>
<feature type="glycosylation site" description="N-linked (GlcNAc...) asparagine" evidence="2">
    <location>
        <position position="97"/>
    </location>
</feature>
<feature type="glycosylation site" description="N-linked (GlcNAc...) asparagine" evidence="2">
    <location>
        <position position="296"/>
    </location>
</feature>
<feature type="glycosylation site" description="N-linked (GlcNAc...) asparagine" evidence="2">
    <location>
        <position position="308"/>
    </location>
</feature>
<feature type="glycosylation site" description="N-linked (GlcNAc...) asparagine" evidence="2">
    <location>
        <position position="336"/>
    </location>
</feature>
<feature type="glycosylation site" description="N-linked (GlcNAc...) asparagine" evidence="2">
    <location>
        <position position="356"/>
    </location>
</feature>
<feature type="glycosylation site" description="N-linked (GlcNAc...) asparagine" evidence="2">
    <location>
        <position position="370"/>
    </location>
</feature>
<feature type="glycosylation site" description="N-linked (GlcNAc...) asparagine" evidence="2">
    <location>
        <position position="527"/>
    </location>
</feature>
<feature type="glycosylation site" description="N-linked (GlcNAc...) asparagine" evidence="2">
    <location>
        <position position="547"/>
    </location>
</feature>
<feature type="mutagenesis site" description="Induces nonselectivity for Arg and Glu." evidence="3">
    <original>K</original>
    <variation>M</variation>
    <location>
        <position position="386"/>
    </location>
</feature>
<sequence>MDLMSFILLWAGLMKVAEASIAQFSQLGASAPGNIIIGGLFPIHEAVVPVNYTGNNSISAPEHPDCIRFYTKGLNQALAMINAVEMANKSPMLSSLNITLGYRIYDTCSDVTTALRAVHDIMRPFSDCESPEDSSQPVQPIMAVIGTTSSEISIAVARDLNLQMIPQISYASTATILSDKSRFPAFMRTVPSDEYQTCAMAKLLKSNKWSWVGIIITDGDYGRSALEGFIQHTETEGICIAFKAILPDSLADQQKLNTDIENTLNIIENNPKVRVVISFAKSSQMQLLFKGLQSRNISNNMVWVASDNWSTAKHILNDGSITDIGKVLGFTFKSGNFTSFHQYLKNLQFESEDEMNNSFLKEFLKLNAGNASNTVLELMKSTNLDKIFSIEMAVTAVANAVAKLCAERQCQDSTALQPWELLRQLRSITFENGGEMYKFDANGDINLGYDLFLWEGDQSDEHADDIIAEYDPTKGGFHYIHNDLSEIKKVVSRCSNSCQPGQYKKTAEGQHTCCYECLTCVENHYSNITDADECSPCDSESMWSLANSTECHPKVFEYFDWNSGFAIVLLILAALGVLLLFFMSALFFWQRHSPVVKAAGGPLCHLILVSLLGSFISVVFFVGEPSDLTCRARQVIFGFSFTLCVSCILVKSLKILLAFEMNFELKELLCMLYKPYMIVSVGMGVQIIICTVWLTLYKPFKDKEVQTESILLECNEGFYVMFWLMLGYIALLALFCFTFAYIGRKLPQKYNEAKFITFSMVICLMAWIIFIPIHVTTSGKYVPAVEMVVILISNYGILSCHFLPKSYIILFKKEHNTKDAFMKNVYEYARKSAENIKGLTGTEPQFKQENSVYTISNLSFVPEEKHE</sequence>
<organism>
    <name type="scientific">Danio rerio</name>
    <name type="common">Zebrafish</name>
    <name type="synonym">Brachydanio rerio</name>
    <dbReference type="NCBI Taxonomy" id="7955"/>
    <lineage>
        <taxon>Eukaryota</taxon>
        <taxon>Metazoa</taxon>
        <taxon>Chordata</taxon>
        <taxon>Craniata</taxon>
        <taxon>Vertebrata</taxon>
        <taxon>Euteleostomi</taxon>
        <taxon>Actinopterygii</taxon>
        <taxon>Neopterygii</taxon>
        <taxon>Teleostei</taxon>
        <taxon>Ostariophysi</taxon>
        <taxon>Cypriniformes</taxon>
        <taxon>Danionidae</taxon>
        <taxon>Danioninae</taxon>
        <taxon>Danio</taxon>
    </lineage>
</organism>
<proteinExistence type="evidence at protein level"/>
<comment type="function">
    <text evidence="3">Olfactory receptor that is activated by amino acids that act as potent odorants in fish. Displays preference for acidic amino acids such as Glu over basic amino acids.</text>
</comment>
<comment type="subunit">
    <text evidence="1">Homodimer; disulfide-linked.</text>
</comment>
<comment type="subcellular location">
    <subcellularLocation>
        <location evidence="1">Cell membrane</location>
        <topology evidence="1">Multi-pass membrane protein</topology>
    </subcellularLocation>
</comment>
<comment type="similarity">
    <text evidence="4">Belongs to the G-protein coupled receptor 3 family.</text>
</comment>
<dbReference type="EMBL" id="AY770492">
    <property type="protein sequence ID" value="AAV51935.1"/>
    <property type="molecule type" value="mRNA"/>
</dbReference>
<dbReference type="RefSeq" id="NP_001008731.1">
    <property type="nucleotide sequence ID" value="NM_001008731.1"/>
</dbReference>
<dbReference type="SMR" id="Q5U9X3"/>
<dbReference type="FunCoup" id="Q5U9X3">
    <property type="interactions" value="1715"/>
</dbReference>
<dbReference type="STRING" id="7955.ENSDARP00000002697"/>
<dbReference type="GlyCosmos" id="Q5U9X3">
    <property type="glycosylation" value="10 sites, No reported glycans"/>
</dbReference>
<dbReference type="PaxDb" id="7955-ENSDARP00000002697"/>
<dbReference type="Ensembl" id="ENSDART00000008880">
    <property type="protein sequence ID" value="ENSDARP00000002697"/>
    <property type="gene ID" value="ENSDARG00000005371"/>
</dbReference>
<dbReference type="GeneID" id="494131"/>
<dbReference type="KEGG" id="dre:494131"/>
<dbReference type="AGR" id="ZFIN:ZDB-GENE-041217-22"/>
<dbReference type="CTD" id="222545"/>
<dbReference type="ZFIN" id="ZDB-GENE-041217-22">
    <property type="gene designation" value="gprc6a"/>
</dbReference>
<dbReference type="eggNOG" id="KOG1056">
    <property type="taxonomic scope" value="Eukaryota"/>
</dbReference>
<dbReference type="HOGENOM" id="CLU_005389_1_0_1"/>
<dbReference type="InParanoid" id="Q5U9X3"/>
<dbReference type="OMA" id="ASPHTCC"/>
<dbReference type="OrthoDB" id="425344at2759"/>
<dbReference type="PhylomeDB" id="Q5U9X3"/>
<dbReference type="TreeFam" id="TF331269"/>
<dbReference type="Reactome" id="R-DRE-416476">
    <property type="pathway name" value="G alpha (q) signalling events"/>
</dbReference>
<dbReference type="Reactome" id="R-DRE-420499">
    <property type="pathway name" value="Class C/3 (Metabotropic glutamate/pheromone receptors)"/>
</dbReference>
<dbReference type="PRO" id="PR:Q5U9X3"/>
<dbReference type="Proteomes" id="UP000000437">
    <property type="component" value="Chromosome 16"/>
</dbReference>
<dbReference type="Bgee" id="ENSDARG00000005371">
    <property type="expression patterns" value="Expressed in swim bladder and 3 other cell types or tissues"/>
</dbReference>
<dbReference type="ExpressionAtlas" id="Q5U9X3">
    <property type="expression patterns" value="baseline and differential"/>
</dbReference>
<dbReference type="GO" id="GO:0005886">
    <property type="term" value="C:plasma membrane"/>
    <property type="evidence" value="ECO:0000250"/>
    <property type="project" value="UniProtKB"/>
</dbReference>
<dbReference type="GO" id="GO:0016597">
    <property type="term" value="F:amino acid binding"/>
    <property type="evidence" value="ECO:0000314"/>
    <property type="project" value="ZFIN"/>
</dbReference>
<dbReference type="GO" id="GO:0004930">
    <property type="term" value="F:G protein-coupled receptor activity"/>
    <property type="evidence" value="ECO:0000318"/>
    <property type="project" value="GO_Central"/>
</dbReference>
<dbReference type="GO" id="GO:0016595">
    <property type="term" value="F:glutamate binding"/>
    <property type="evidence" value="ECO:0000314"/>
    <property type="project" value="ZFIN"/>
</dbReference>
<dbReference type="GO" id="GO:0006874">
    <property type="term" value="P:intracellular calcium ion homeostasis"/>
    <property type="evidence" value="ECO:0000314"/>
    <property type="project" value="ZFIN"/>
</dbReference>
<dbReference type="GO" id="GO:0007608">
    <property type="term" value="P:sensory perception of smell"/>
    <property type="evidence" value="ECO:0007669"/>
    <property type="project" value="UniProtKB-KW"/>
</dbReference>
<dbReference type="CDD" id="cd15281">
    <property type="entry name" value="7tmC_GPRC6A"/>
    <property type="match status" value="1"/>
</dbReference>
<dbReference type="CDD" id="cd06361">
    <property type="entry name" value="PBP1_GPC6A-like"/>
    <property type="match status" value="1"/>
</dbReference>
<dbReference type="FunFam" id="3.40.50.2300:FF:000152">
    <property type="entry name" value="G protein-coupled receptor class C group 6 member A"/>
    <property type="match status" value="1"/>
</dbReference>
<dbReference type="FunFam" id="2.10.50.30:FF:000004">
    <property type="entry name" value="Taste receptor type 1 member 3-like protein"/>
    <property type="match status" value="1"/>
</dbReference>
<dbReference type="Gene3D" id="3.40.50.2300">
    <property type="match status" value="2"/>
</dbReference>
<dbReference type="Gene3D" id="2.10.50.30">
    <property type="entry name" value="GPCR, family 3, nine cysteines domain"/>
    <property type="match status" value="1"/>
</dbReference>
<dbReference type="InterPro" id="IPR001828">
    <property type="entry name" value="ANF_lig-bd_rcpt"/>
</dbReference>
<dbReference type="InterPro" id="IPR000337">
    <property type="entry name" value="GPCR_3"/>
</dbReference>
<dbReference type="InterPro" id="IPR011500">
    <property type="entry name" value="GPCR_3_9-Cys_dom"/>
</dbReference>
<dbReference type="InterPro" id="IPR038550">
    <property type="entry name" value="GPCR_3_9-Cys_sf"/>
</dbReference>
<dbReference type="InterPro" id="IPR017978">
    <property type="entry name" value="GPCR_3_C"/>
</dbReference>
<dbReference type="InterPro" id="IPR000068">
    <property type="entry name" value="GPCR_3_Ca_sens_rcpt-rel"/>
</dbReference>
<dbReference type="InterPro" id="IPR017979">
    <property type="entry name" value="GPCR_3_CS"/>
</dbReference>
<dbReference type="InterPro" id="IPR028082">
    <property type="entry name" value="Peripla_BP_I"/>
</dbReference>
<dbReference type="PANTHER" id="PTHR24061">
    <property type="entry name" value="CALCIUM-SENSING RECEPTOR-RELATED"/>
    <property type="match status" value="1"/>
</dbReference>
<dbReference type="PANTHER" id="PTHR24061:SF5">
    <property type="entry name" value="G-PROTEIN COUPLED RECEPTOR FAMILY C GROUP 6 MEMBER A"/>
    <property type="match status" value="1"/>
</dbReference>
<dbReference type="Pfam" id="PF00003">
    <property type="entry name" value="7tm_3"/>
    <property type="match status" value="1"/>
</dbReference>
<dbReference type="Pfam" id="PF01094">
    <property type="entry name" value="ANF_receptor"/>
    <property type="match status" value="1"/>
</dbReference>
<dbReference type="Pfam" id="PF07562">
    <property type="entry name" value="NCD3G"/>
    <property type="match status" value="1"/>
</dbReference>
<dbReference type="PRINTS" id="PR00592">
    <property type="entry name" value="CASENSINGR"/>
</dbReference>
<dbReference type="PRINTS" id="PR00248">
    <property type="entry name" value="GPCRMGR"/>
</dbReference>
<dbReference type="SUPFAM" id="SSF53822">
    <property type="entry name" value="Periplasmic binding protein-like I"/>
    <property type="match status" value="1"/>
</dbReference>
<dbReference type="PROSITE" id="PS00980">
    <property type="entry name" value="G_PROTEIN_RECEP_F3_2"/>
    <property type="match status" value="1"/>
</dbReference>
<dbReference type="PROSITE" id="PS00981">
    <property type="entry name" value="G_PROTEIN_RECEP_F3_3"/>
    <property type="match status" value="1"/>
</dbReference>
<dbReference type="PROSITE" id="PS50259">
    <property type="entry name" value="G_PROTEIN_RECEP_F3_4"/>
    <property type="match status" value="1"/>
</dbReference>
<accession>Q5U9X3</accession>
<reference key="1">
    <citation type="journal article" date="2004" name="J. Neurosci.">
        <title>Molecular determinants of ligand selectivity in a vertebrate odorant receptor.</title>
        <authorList>
            <person name="Luu P."/>
            <person name="Acher F."/>
            <person name="Bertrand H.-O."/>
            <person name="Fan J."/>
            <person name="Ngai J."/>
        </authorList>
    </citation>
    <scope>NUCLEOTIDE SEQUENCE [MRNA]</scope>
    <scope>FUNCTION</scope>
    <scope>MUTAGENESIS OF LYS-386</scope>
</reference>
<protein>
    <recommendedName>
        <fullName>G-protein coupled receptor family C group 6 member A</fullName>
    </recommendedName>
    <alternativeName>
        <fullName>Odorant receptor ZO6</fullName>
    </alternativeName>
</protein>
<evidence type="ECO:0000250" key="1">
    <source>
        <dbReference type="UniProtKB" id="Q8K4Z6"/>
    </source>
</evidence>
<evidence type="ECO:0000255" key="2"/>
<evidence type="ECO:0000269" key="3">
    <source>
    </source>
</evidence>
<evidence type="ECO:0000305" key="4"/>
<keyword id="KW-1003">Cell membrane</keyword>
<keyword id="KW-1015">Disulfide bond</keyword>
<keyword id="KW-0297">G-protein coupled receptor</keyword>
<keyword id="KW-0325">Glycoprotein</keyword>
<keyword id="KW-0472">Membrane</keyword>
<keyword id="KW-0552">Olfaction</keyword>
<keyword id="KW-0675">Receptor</keyword>
<keyword id="KW-1185">Reference proteome</keyword>
<keyword id="KW-0716">Sensory transduction</keyword>
<keyword id="KW-0732">Signal</keyword>
<keyword id="KW-0807">Transducer</keyword>
<keyword id="KW-0812">Transmembrane</keyword>
<keyword id="KW-1133">Transmembrane helix</keyword>
<name>GPC6A_DANRE</name>